<reference key="1">
    <citation type="journal article" date="1992" name="Yeast">
        <title>The sequence of a 9.3 kb segment located on the left arm of the yeast chromosome XI reveals five open reading frames including the CCE1 gene and putative products related to MYO2 and to the ribosomal protein L10.</title>
        <authorList>
            <person name="Pascolo S."/>
            <person name="Ghazvini M."/>
            <person name="Boyer J."/>
            <person name="Colleaux L."/>
            <person name="Thierry A."/>
            <person name="Dujon B."/>
        </authorList>
    </citation>
    <scope>NUCLEOTIDE SEQUENCE [GENOMIC DNA]</scope>
</reference>
<reference key="2">
    <citation type="journal article" date="1994" name="Nature">
        <title>Complete DNA sequence of yeast chromosome XI.</title>
        <authorList>
            <person name="Dujon B."/>
            <person name="Alexandraki D."/>
            <person name="Andre B."/>
            <person name="Ansorge W."/>
            <person name="Baladron V."/>
            <person name="Ballesta J.P.G."/>
            <person name="Banrevi A."/>
            <person name="Bolle P.-A."/>
            <person name="Bolotin-Fukuhara M."/>
            <person name="Bossier P."/>
            <person name="Bou G."/>
            <person name="Boyer J."/>
            <person name="Buitrago M.J."/>
            <person name="Cheret G."/>
            <person name="Colleaux L."/>
            <person name="Daignan-Fornier B."/>
            <person name="del Rey F."/>
            <person name="Dion C."/>
            <person name="Domdey H."/>
            <person name="Duesterhoeft A."/>
            <person name="Duesterhus S."/>
            <person name="Entian K.-D."/>
            <person name="Erfle H."/>
            <person name="Esteban P.F."/>
            <person name="Feldmann H."/>
            <person name="Fernandes L."/>
            <person name="Fobo G.M."/>
            <person name="Fritz C."/>
            <person name="Fukuhara H."/>
            <person name="Gabel C."/>
            <person name="Gaillon L."/>
            <person name="Garcia-Cantalejo J.M."/>
            <person name="Garcia-Ramirez J.J."/>
            <person name="Gent M.E."/>
            <person name="Ghazvini M."/>
            <person name="Goffeau A."/>
            <person name="Gonzalez A."/>
            <person name="Grothues D."/>
            <person name="Guerreiro P."/>
            <person name="Hegemann J.H."/>
            <person name="Hewitt N."/>
            <person name="Hilger F."/>
            <person name="Hollenberg C.P."/>
            <person name="Horaitis O."/>
            <person name="Indge K.J."/>
            <person name="Jacquier A."/>
            <person name="James C.M."/>
            <person name="Jauniaux J.-C."/>
            <person name="Jimenez A."/>
            <person name="Keuchel H."/>
            <person name="Kirchrath L."/>
            <person name="Kleine K."/>
            <person name="Koetter P."/>
            <person name="Legrain P."/>
            <person name="Liebl S."/>
            <person name="Louis E.J."/>
            <person name="Maia e Silva A."/>
            <person name="Marck C."/>
            <person name="Monnier A.-L."/>
            <person name="Moestl D."/>
            <person name="Mueller S."/>
            <person name="Obermaier B."/>
            <person name="Oliver S.G."/>
            <person name="Pallier C."/>
            <person name="Pascolo S."/>
            <person name="Pfeiffer F."/>
            <person name="Philippsen P."/>
            <person name="Planta R.J."/>
            <person name="Pohl F.M."/>
            <person name="Pohl T.M."/>
            <person name="Poehlmann R."/>
            <person name="Portetelle D."/>
            <person name="Purnelle B."/>
            <person name="Puzos V."/>
            <person name="Ramezani Rad M."/>
            <person name="Rasmussen S.W."/>
            <person name="Remacha M.A."/>
            <person name="Revuelta J.L."/>
            <person name="Richard G.-F."/>
            <person name="Rieger M."/>
            <person name="Rodrigues-Pousada C."/>
            <person name="Rose M."/>
            <person name="Rupp T."/>
            <person name="Santos M.A."/>
            <person name="Schwager C."/>
            <person name="Sensen C."/>
            <person name="Skala J."/>
            <person name="Soares H."/>
            <person name="Sor F."/>
            <person name="Stegemann J."/>
            <person name="Tettelin H."/>
            <person name="Thierry A."/>
            <person name="Tzermia M."/>
            <person name="Urrestarazu L.A."/>
            <person name="van Dyck L."/>
            <person name="van Vliet-Reedijk J.C."/>
            <person name="Valens M."/>
            <person name="Vandenbol M."/>
            <person name="Vilela C."/>
            <person name="Vissers S."/>
            <person name="von Wettstein D."/>
            <person name="Voss H."/>
            <person name="Wiemann S."/>
            <person name="Xu G."/>
            <person name="Zimmermann J."/>
            <person name="Haasemann M."/>
            <person name="Becker I."/>
            <person name="Mewes H.-W."/>
        </authorList>
    </citation>
    <scope>NUCLEOTIDE SEQUENCE [LARGE SCALE GENOMIC DNA]</scope>
    <source>
        <strain>ATCC 204508 / S288c</strain>
    </source>
</reference>
<reference key="3">
    <citation type="journal article" date="2014" name="G3 (Bethesda)">
        <title>The reference genome sequence of Saccharomyces cerevisiae: Then and now.</title>
        <authorList>
            <person name="Engel S.R."/>
            <person name="Dietrich F.S."/>
            <person name="Fisk D.G."/>
            <person name="Binkley G."/>
            <person name="Balakrishnan R."/>
            <person name="Costanzo M.C."/>
            <person name="Dwight S.S."/>
            <person name="Hitz B.C."/>
            <person name="Karra K."/>
            <person name="Nash R.S."/>
            <person name="Weng S."/>
            <person name="Wong E.D."/>
            <person name="Lloyd P."/>
            <person name="Skrzypek M.S."/>
            <person name="Miyasato S.R."/>
            <person name="Simison M."/>
            <person name="Cherry J.M."/>
        </authorList>
    </citation>
    <scope>GENOME REANNOTATION</scope>
    <source>
        <strain>ATCC 204508 / S288c</strain>
    </source>
</reference>
<reference key="4">
    <citation type="journal article" date="1997" name="Proc. Natl. Acad. Sci. U.S.A.">
        <title>Identification of the proteins of the yeast U1 small nuclear ribonucleoprotein complex by mass spectrometry.</title>
        <authorList>
            <person name="Neubauer G."/>
            <person name="Gottschalk A."/>
            <person name="Fabrizio P."/>
            <person name="Seraphin B."/>
            <person name="Luehrmann R."/>
            <person name="Mann M."/>
        </authorList>
    </citation>
    <scope>PARTIAL PROTEIN SEQUENCE</scope>
</reference>
<reference key="5">
    <citation type="journal article" date="1996" name="Mol. Cell. Biol.">
        <title>Identification of Prp40, a novel essential yeast splicing factor associated with the U1 small nuclear ribonucleoprotein particle.</title>
        <authorList>
            <person name="Kao H.-Y."/>
            <person name="Siliciano P.G."/>
        </authorList>
    </citation>
    <scope>IDENTIFICATION</scope>
    <scope>MUTAGENESIS OF SER-240</scope>
</reference>
<reference key="6">
    <citation type="journal article" date="1997" name="Cell">
        <title>Cross-intron bridging interactions in the yeast commitment complex are conserved in mammals.</title>
        <authorList>
            <person name="Abovich N."/>
            <person name="Rosbash M."/>
        </authorList>
    </citation>
    <scope>FUNCTION</scope>
    <scope>INTERACTION WITH MSL5; MUD2 AND PRP8</scope>
</reference>
<reference key="7">
    <citation type="journal article" date="2000" name="J. Biol. Chem.">
        <title>The splicing factor, Prp40, binds the phosphorylated carboxyl-terminal domain of RNA polymerase II.</title>
        <authorList>
            <person name="Morris D.P."/>
            <person name="Greenleaf A.L."/>
        </authorList>
    </citation>
    <scope>FUNCTION</scope>
    <scope>INTERACTION WITH RPB1</scope>
</reference>
<reference key="8">
    <citation type="journal article" date="2004" name="Genetics">
        <title>The yeast splicing factor Prp40p contains functional leucine-rich nuclear export signals that are essential for splicing.</title>
        <authorList>
            <person name="Murphy M.W."/>
            <person name="Olson B.L."/>
            <person name="Siliciano P.G."/>
        </authorList>
    </citation>
    <scope>FUNCTION</scope>
    <scope>INTERACTION WITH CRM1</scope>
    <scope>SUBCELLULAR LOCATION</scope>
    <scope>MUTAGENESIS OF LEU-274; LEU-277; LEU-281; LEU-340; LEU-344 AND LEU-347</scope>
</reference>
<reference key="9">
    <citation type="journal article" date="2009" name="Science">
        <title>Global analysis of Cdk1 substrate phosphorylation sites provides insights into evolution.</title>
        <authorList>
            <person name="Holt L.J."/>
            <person name="Tuch B.B."/>
            <person name="Villen J."/>
            <person name="Johnson A.D."/>
            <person name="Gygi S.P."/>
            <person name="Morgan D.O."/>
        </authorList>
    </citation>
    <scope>PHOSPHORYLATION [LARGE SCALE ANALYSIS] AT THR-576</scope>
    <scope>IDENTIFICATION BY MASS SPECTROMETRY [LARGE SCALE ANALYSIS]</scope>
</reference>
<reference key="10">
    <citation type="journal article" date="2002" name="J. Mol. Biol.">
        <title>Solution structure and ligand recognition of the WW domain pair of the yeast splicing factor Prp40.</title>
        <authorList>
            <person name="Wiesner S."/>
            <person name="Stier G."/>
            <person name="Sattler M."/>
            <person name="Macias M.J."/>
        </authorList>
    </citation>
    <scope>STRUCTURE BY NMR OF 1-75</scope>
</reference>
<keyword id="KW-0002">3D-structure</keyword>
<keyword id="KW-0903">Direct protein sequencing</keyword>
<keyword id="KW-0507">mRNA processing</keyword>
<keyword id="KW-0508">mRNA splicing</keyword>
<keyword id="KW-0539">Nucleus</keyword>
<keyword id="KW-0597">Phosphoprotein</keyword>
<keyword id="KW-1185">Reference proteome</keyword>
<keyword id="KW-0677">Repeat</keyword>
<keyword id="KW-0687">Ribonucleoprotein</keyword>
<evidence type="ECO:0000255" key="1">
    <source>
        <dbReference type="PROSITE-ProRule" id="PRU00224"/>
    </source>
</evidence>
<evidence type="ECO:0000269" key="2">
    <source>
    </source>
</evidence>
<evidence type="ECO:0000269" key="3">
    <source>
    </source>
</evidence>
<evidence type="ECO:0000269" key="4">
    <source>
    </source>
</evidence>
<evidence type="ECO:0000269" key="5">
    <source>
    </source>
</evidence>
<evidence type="ECO:0000305" key="6"/>
<evidence type="ECO:0007744" key="7">
    <source>
    </source>
</evidence>
<evidence type="ECO:0007829" key="8">
    <source>
        <dbReference type="PDB" id="1O6W"/>
    </source>
</evidence>
<evidence type="ECO:0007829" key="9">
    <source>
        <dbReference type="PDB" id="2B7E"/>
    </source>
</evidence>
<evidence type="ECO:0007829" key="10">
    <source>
        <dbReference type="PDB" id="2KFD"/>
    </source>
</evidence>
<comment type="function">
    <text evidence="2 3 5">Required for pre-spliceosome formation, which is the first step of pre-mRNA splicing. This protein is associated with snRNP U1. Two commitment complexes, CC1 and CC2, have been defined in yeast. CC1 is a basal complex dependent only on the 5' splice site. CC2 is a complex of lower mobility and is dependent on a branchpoint as well as a 5' splice site region. This protein is involved in CC2 formation where it binds to the branchpoint binding protein MSL5, bridging the U1 snRNP-associated 5' splice site and the MSL5-associated branch point 3' intron splice site.</text>
</comment>
<comment type="subunit">
    <text evidence="2 3 5">Interacts with CRM1, MSL5, PRP8, and the RNA polymerase II largest subunit (RPB1). MSL5, MUD2 and PRP40 interact to form the commitment complex 2 (CC2), a precursor of mature spliceosomes.</text>
</comment>
<comment type="interaction">
    <interactant intactId="EBI-701">
        <id>P33203</id>
    </interactant>
    <interactant intactId="EBI-14267">
        <id>P80210</id>
        <label>ADE12</label>
    </interactant>
    <organismsDiffer>false</organismsDiffer>
    <experiments>2</experiments>
</comment>
<comment type="interaction">
    <interactant intactId="EBI-701">
        <id>P33203</id>
    </interactant>
    <interactant intactId="EBI-2548">
        <id>P15274</id>
        <label>AMD1</label>
    </interactant>
    <organismsDiffer>false</organismsDiffer>
    <experiments>2</experiments>
</comment>
<comment type="interaction">
    <interactant intactId="EBI-701">
        <id>P33203</id>
    </interactant>
    <interactant intactId="EBI-29375">
        <id>Q08968</id>
        <label>FMP40</label>
    </interactant>
    <organismsDiffer>false</organismsDiffer>
    <experiments>2</experiments>
</comment>
<comment type="interaction">
    <interactant intactId="EBI-701">
        <id>P33203</id>
    </interactant>
    <interactant intactId="EBI-13389">
        <id>P06738</id>
        <label>GPH1</label>
    </interactant>
    <organismsDiffer>false</organismsDiffer>
    <experiments>2</experiments>
</comment>
<comment type="interaction">
    <interactant intactId="EBI-701">
        <id>P33203</id>
    </interactant>
    <interactant intactId="EBI-10046">
        <id>P33399</id>
        <label>LHP1</label>
    </interactant>
    <organismsDiffer>false</organismsDiffer>
    <experiments>2</experiments>
</comment>
<comment type="interaction">
    <interactant intactId="EBI-701">
        <id>P33203</id>
    </interactant>
    <interactant intactId="EBI-10428">
        <id>P30952</id>
        <label>MLS1</label>
    </interactant>
    <organismsDiffer>false</organismsDiffer>
    <experiments>2</experiments>
</comment>
<comment type="interaction">
    <interactant intactId="EBI-701">
        <id>P33203</id>
    </interactant>
    <interactant intactId="EBI-12218">
        <id>P39683</id>
        <label>NPT1</label>
    </interactant>
    <organismsDiffer>false</organismsDiffer>
    <experiments>2</experiments>
</comment>
<comment type="interaction">
    <interactant intactId="EBI-701">
        <id>P33203</id>
    </interactant>
    <interactant intactId="EBI-13770">
        <id>P10963</id>
        <label>PCK1</label>
    </interactant>
    <organismsDiffer>false</organismsDiffer>
    <experiments>2</experiments>
</comment>
<comment type="interaction">
    <interactant intactId="EBI-701">
        <id>P33203</id>
    </interactant>
    <interactant intactId="EBI-11238">
        <id>P39015</id>
        <label>STM1</label>
    </interactant>
    <organismsDiffer>false</organismsDiffer>
    <experiments>2</experiments>
</comment>
<comment type="interaction">
    <interactant intactId="EBI-701">
        <id>P33203</id>
    </interactant>
    <interactant intactId="EBI-5951">
        <id>Q07505</id>
        <label>YDL086W</label>
    </interactant>
    <organismsDiffer>false</organismsDiffer>
    <experiments>2</experiments>
</comment>
<comment type="interaction">
    <interactant intactId="EBI-701">
        <id>P33203</id>
    </interactant>
    <interactant intactId="EBI-25572">
        <id>P47137</id>
        <label>YJR096W</label>
    </interactant>
    <organismsDiffer>false</organismsDiffer>
    <experiments>2</experiments>
</comment>
<comment type="subcellular location">
    <subcellularLocation>
        <location evidence="3">Nucleus</location>
    </subcellularLocation>
</comment>
<comment type="domain">
    <text>The WW and FF domains bind to the phosphorylated carboxy-terminal domain of RPB1.</text>
</comment>
<comment type="similarity">
    <text evidence="6">Belongs to the PRPF40 family.</text>
</comment>
<protein>
    <recommendedName>
        <fullName>Pre-mRNA-processing protein PRP40</fullName>
    </recommendedName>
</protein>
<gene>
    <name type="primary">PRP40</name>
    <name type="ordered locus">YKL012W</name>
    <name type="ORF">YKL165</name>
</gene>
<dbReference type="EMBL" id="S53418">
    <property type="protein sequence ID" value="AAB24902.1"/>
    <property type="molecule type" value="Genomic_DNA"/>
</dbReference>
<dbReference type="EMBL" id="Z28012">
    <property type="protein sequence ID" value="CAA81847.1"/>
    <property type="molecule type" value="Genomic_DNA"/>
</dbReference>
<dbReference type="EMBL" id="BK006944">
    <property type="protein sequence ID" value="DAA09144.1"/>
    <property type="molecule type" value="Genomic_DNA"/>
</dbReference>
<dbReference type="PIR" id="S30014">
    <property type="entry name" value="S30014"/>
</dbReference>
<dbReference type="RefSeq" id="NP_012913.3">
    <property type="nucleotide sequence ID" value="NM_001179578.3"/>
</dbReference>
<dbReference type="PDB" id="1O6W">
    <property type="method" value="NMR"/>
    <property type="chains" value="A=1-75"/>
</dbReference>
<dbReference type="PDB" id="2B7E">
    <property type="method" value="NMR"/>
    <property type="chains" value="A=134-189"/>
</dbReference>
<dbReference type="PDB" id="2KFD">
    <property type="method" value="NMR"/>
    <property type="chains" value="A=488-552"/>
</dbReference>
<dbReference type="PDB" id="6N7P">
    <property type="method" value="EM"/>
    <property type="resolution" value="3.60 A"/>
    <property type="chains" value="J=1-583"/>
</dbReference>
<dbReference type="PDB" id="7OQE">
    <property type="method" value="EM"/>
    <property type="resolution" value="5.90 A"/>
    <property type="chains" value="K=1-583"/>
</dbReference>
<dbReference type="PDBsum" id="1O6W"/>
<dbReference type="PDBsum" id="2B7E"/>
<dbReference type="PDBsum" id="2KFD"/>
<dbReference type="PDBsum" id="6N7P"/>
<dbReference type="PDBsum" id="7OQE"/>
<dbReference type="BMRB" id="P33203"/>
<dbReference type="EMDB" id="EMD-0360"/>
<dbReference type="EMDB" id="EMD-13033"/>
<dbReference type="SMR" id="P33203"/>
<dbReference type="BioGRID" id="34120">
    <property type="interactions" value="254"/>
</dbReference>
<dbReference type="ComplexPortal" id="CPX-23">
    <property type="entry name" value="U1 small nuclear ribonucleoprotein complex"/>
</dbReference>
<dbReference type="DIP" id="DIP-1620N"/>
<dbReference type="FunCoup" id="P33203">
    <property type="interactions" value="1384"/>
</dbReference>
<dbReference type="IntAct" id="P33203">
    <property type="interactions" value="127"/>
</dbReference>
<dbReference type="MINT" id="P33203"/>
<dbReference type="STRING" id="4932.YKL012W"/>
<dbReference type="iPTMnet" id="P33203"/>
<dbReference type="PaxDb" id="4932-YKL012W"/>
<dbReference type="PeptideAtlas" id="P33203"/>
<dbReference type="EnsemblFungi" id="YKL012W_mRNA">
    <property type="protein sequence ID" value="YKL012W"/>
    <property type="gene ID" value="YKL012W"/>
</dbReference>
<dbReference type="GeneID" id="853857"/>
<dbReference type="KEGG" id="sce:YKL012W"/>
<dbReference type="AGR" id="SGD:S000001495"/>
<dbReference type="SGD" id="S000001495">
    <property type="gene designation" value="PRP40"/>
</dbReference>
<dbReference type="VEuPathDB" id="FungiDB:YKL012W"/>
<dbReference type="eggNOG" id="KOG0152">
    <property type="taxonomic scope" value="Eukaryota"/>
</dbReference>
<dbReference type="GeneTree" id="ENSGT00930000150980"/>
<dbReference type="HOGENOM" id="CLU_005825_1_1_1"/>
<dbReference type="InParanoid" id="P33203"/>
<dbReference type="OMA" id="NEPIYKH"/>
<dbReference type="OrthoDB" id="187617at2759"/>
<dbReference type="BioCyc" id="YEAST:G3O-31821-MONOMER"/>
<dbReference type="BioGRID-ORCS" id="853857">
    <property type="hits" value="0 hits in 10 CRISPR screens"/>
</dbReference>
<dbReference type="EvolutionaryTrace" id="P33203"/>
<dbReference type="PRO" id="PR:P33203"/>
<dbReference type="Proteomes" id="UP000002311">
    <property type="component" value="Chromosome XI"/>
</dbReference>
<dbReference type="RNAct" id="P33203">
    <property type="molecule type" value="protein"/>
</dbReference>
<dbReference type="GO" id="GO:0000243">
    <property type="term" value="C:commitment complex"/>
    <property type="evidence" value="ECO:0000303"/>
    <property type="project" value="ComplexPortal"/>
</dbReference>
<dbReference type="GO" id="GO:0005634">
    <property type="term" value="C:nucleus"/>
    <property type="evidence" value="ECO:0000315"/>
    <property type="project" value="SGD"/>
</dbReference>
<dbReference type="GO" id="GO:0005681">
    <property type="term" value="C:spliceosomal complex"/>
    <property type="evidence" value="ECO:0000303"/>
    <property type="project" value="ComplexPortal"/>
</dbReference>
<dbReference type="GO" id="GO:0005685">
    <property type="term" value="C:U1 snRNP"/>
    <property type="evidence" value="ECO:0000314"/>
    <property type="project" value="SGD"/>
</dbReference>
<dbReference type="GO" id="GO:0071004">
    <property type="term" value="C:U2-type prespliceosome"/>
    <property type="evidence" value="ECO:0000314"/>
    <property type="project" value="SGD"/>
</dbReference>
<dbReference type="GO" id="GO:0003723">
    <property type="term" value="F:RNA binding"/>
    <property type="evidence" value="ECO:0000314"/>
    <property type="project" value="SGD"/>
</dbReference>
<dbReference type="GO" id="GO:0000395">
    <property type="term" value="P:mRNA 5'-splice site recognition"/>
    <property type="evidence" value="ECO:0000303"/>
    <property type="project" value="ComplexPortal"/>
</dbReference>
<dbReference type="GO" id="GO:0000398">
    <property type="term" value="P:mRNA splicing, via spliceosome"/>
    <property type="evidence" value="ECO:0000314"/>
    <property type="project" value="SGD"/>
</dbReference>
<dbReference type="CDD" id="cd00201">
    <property type="entry name" value="WW"/>
    <property type="match status" value="2"/>
</dbReference>
<dbReference type="FunFam" id="1.10.10.440:FF:000036">
    <property type="entry name" value="Pre-mRNA-processing factor 40"/>
    <property type="match status" value="1"/>
</dbReference>
<dbReference type="FunFam" id="1.10.10.440:FF:000045">
    <property type="entry name" value="U1 snRNP protein"/>
    <property type="match status" value="1"/>
</dbReference>
<dbReference type="FunFam" id="1.10.10.440:FF:000050">
    <property type="entry name" value="U1 snRNP protein"/>
    <property type="match status" value="1"/>
</dbReference>
<dbReference type="FunFam" id="2.20.70.10:FF:000132">
    <property type="entry name" value="U1 snRNP protein"/>
    <property type="match status" value="1"/>
</dbReference>
<dbReference type="Gene3D" id="2.20.70.10">
    <property type="match status" value="2"/>
</dbReference>
<dbReference type="Gene3D" id="1.10.10.440">
    <property type="entry name" value="FF domain"/>
    <property type="match status" value="4"/>
</dbReference>
<dbReference type="InterPro" id="IPR002713">
    <property type="entry name" value="FF_domain"/>
</dbReference>
<dbReference type="InterPro" id="IPR036517">
    <property type="entry name" value="FF_domain_sf"/>
</dbReference>
<dbReference type="InterPro" id="IPR039726">
    <property type="entry name" value="Prp40-like"/>
</dbReference>
<dbReference type="InterPro" id="IPR001202">
    <property type="entry name" value="WW_dom"/>
</dbReference>
<dbReference type="InterPro" id="IPR036020">
    <property type="entry name" value="WW_dom_sf"/>
</dbReference>
<dbReference type="PANTHER" id="PTHR11864">
    <property type="entry name" value="PRE-MRNA-PROCESSING PROTEIN PRP40"/>
    <property type="match status" value="1"/>
</dbReference>
<dbReference type="PANTHER" id="PTHR11864:SF0">
    <property type="entry name" value="PRP40 PRE-MRNA PROCESSING FACTOR 40 HOMOLOG A (YEAST)"/>
    <property type="match status" value="1"/>
</dbReference>
<dbReference type="Pfam" id="PF01846">
    <property type="entry name" value="FF"/>
    <property type="match status" value="3"/>
</dbReference>
<dbReference type="Pfam" id="PF00397">
    <property type="entry name" value="WW"/>
    <property type="match status" value="2"/>
</dbReference>
<dbReference type="SMART" id="SM00441">
    <property type="entry name" value="FF"/>
    <property type="match status" value="4"/>
</dbReference>
<dbReference type="SMART" id="SM00456">
    <property type="entry name" value="WW"/>
    <property type="match status" value="2"/>
</dbReference>
<dbReference type="SUPFAM" id="SSF81698">
    <property type="entry name" value="FF domain"/>
    <property type="match status" value="3"/>
</dbReference>
<dbReference type="SUPFAM" id="SSF51045">
    <property type="entry name" value="WW domain"/>
    <property type="match status" value="2"/>
</dbReference>
<dbReference type="PROSITE" id="PS51676">
    <property type="entry name" value="FF"/>
    <property type="match status" value="6"/>
</dbReference>
<dbReference type="PROSITE" id="PS01159">
    <property type="entry name" value="WW_DOMAIN_1"/>
    <property type="match status" value="2"/>
</dbReference>
<dbReference type="PROSITE" id="PS50020">
    <property type="entry name" value="WW_DOMAIN_2"/>
    <property type="match status" value="2"/>
</dbReference>
<sequence>MSIWKEAKDASGRIYYYNTLTKKSTWEKPKELISQEELLLRENGWKAAKTADGKVYYYNPTTRETSWTIPAFEKKVEPIAEQKHDTVSHAQVNGNRIALTAGEKQEPGRTINEEESQYANNSKLLNVRRRTKEEAEKEFITMLKENQVDSTWSFSRIISELGTRDPRYWMVDDDPLWKKEMFEKYLSNRSADQLLKEHNETSKFKEAFQKMLQNNSHIKYYTRWPTAKRLIADEPIYKHSVVNEKTKRQTFQDYIDTLIDTQKESKKKLKTQALKELREYLNGIITTSSSETFITWQQLLNHYVFDKSKRYMANRHFKVLTHEDVLNEYLKIVNTIENDLQNKLNELRLRNYTRDRIARDNFKSLLREVPIKIKANTRWSDIYPHIKSDPRFLHMLGRNGSSCLDLFLDFVDEQRMYIFAQRSIAQQTLIDQNFEWNDADSDEITKQNIEKVLENDRKFDKVDKEDISLIVDGLIKQRNEKIQQKLQNERRILEQKKHYFWLLLQRTYTKTGKPKPSTWDLASKELGESLEYKALGDEDNIRRQIFEDFKPESSAPTAESATANLTLTASKKRHLTPAVELDY</sequence>
<proteinExistence type="evidence at protein level"/>
<name>PRP40_YEAST</name>
<accession>P33203</accession>
<accession>D6VXS4</accession>
<feature type="chain" id="PRO_0000076084" description="Pre-mRNA-processing protein PRP40">
    <location>
        <begin position="1"/>
        <end position="583"/>
    </location>
</feature>
<feature type="domain" description="WW 1" evidence="1">
    <location>
        <begin position="1"/>
        <end position="31"/>
    </location>
</feature>
<feature type="domain" description="WW 2" evidence="1">
    <location>
        <begin position="42"/>
        <end position="72"/>
    </location>
</feature>
<feature type="domain" description="FF 1">
    <location>
        <begin position="132"/>
        <end position="188"/>
    </location>
</feature>
<feature type="domain" description="FF 2">
    <location>
        <begin position="201"/>
        <end position="257"/>
    </location>
</feature>
<feature type="domain" description="FF 3">
    <location>
        <begin position="262"/>
        <end position="332"/>
    </location>
</feature>
<feature type="domain" description="FF 4">
    <location>
        <begin position="354"/>
        <end position="413"/>
    </location>
</feature>
<feature type="domain" description="FF 5">
    <location>
        <begin position="427"/>
        <end position="488"/>
    </location>
</feature>
<feature type="domain" description="FF 6">
    <location>
        <begin position="491"/>
        <end position="552"/>
    </location>
</feature>
<feature type="modified residue" description="Phosphothreonine" evidence="7">
    <location>
        <position position="576"/>
    </location>
</feature>
<feature type="mutagenesis site" description="In PRP40-1 suppressor; affects SAR1 mRNA accumulation in U1-U4 mutant at 18 degrees Celsius." evidence="4">
    <original>S</original>
    <variation>P</variation>
    <location>
        <position position="240"/>
    </location>
</feature>
<feature type="mutagenesis site" description="Temperature sensitive growth at 36 degrees Celsius." evidence="3">
    <original>L</original>
    <variation>A</variation>
    <location>
        <position position="274"/>
    </location>
</feature>
<feature type="mutagenesis site" description="Temperature sensitive growth at 36 degrees Celsius." evidence="3">
    <original>L</original>
    <variation>A</variation>
    <location>
        <position position="277"/>
    </location>
</feature>
<feature type="mutagenesis site" description="Temperature sensitive growth at 36 degrees Celsius." evidence="3">
    <original>L</original>
    <variation>A</variation>
    <location>
        <position position="281"/>
    </location>
</feature>
<feature type="mutagenesis site" description="Wild-type growth at 36 degrees Celsius." evidence="3">
    <original>L</original>
    <variation>A</variation>
    <location>
        <position position="340"/>
    </location>
</feature>
<feature type="mutagenesis site" description="Wild-type growth at 36 degrees Celsius." evidence="3">
    <original>L</original>
    <variation>A</variation>
    <location>
        <position position="344"/>
    </location>
</feature>
<feature type="mutagenesis site" description="Wild-type growth at 36 degrees Celsius." evidence="3">
    <original>L</original>
    <variation>I</variation>
    <location>
        <position position="347"/>
    </location>
</feature>
<feature type="strand" evidence="8">
    <location>
        <begin position="4"/>
        <end position="8"/>
    </location>
</feature>
<feature type="strand" evidence="8">
    <location>
        <begin position="14"/>
        <end position="18"/>
    </location>
</feature>
<feature type="turn" evidence="8">
    <location>
        <begin position="19"/>
        <end position="22"/>
    </location>
</feature>
<feature type="strand" evidence="8">
    <location>
        <begin position="23"/>
        <end position="27"/>
    </location>
</feature>
<feature type="helix" evidence="8">
    <location>
        <begin position="30"/>
        <end position="43"/>
    </location>
</feature>
<feature type="strand" evidence="8">
    <location>
        <begin position="46"/>
        <end position="49"/>
    </location>
</feature>
<feature type="strand" evidence="8">
    <location>
        <begin position="55"/>
        <end position="59"/>
    </location>
</feature>
<feature type="turn" evidence="8">
    <location>
        <begin position="60"/>
        <end position="63"/>
    </location>
</feature>
<feature type="strand" evidence="8">
    <location>
        <begin position="64"/>
        <end position="68"/>
    </location>
</feature>
<feature type="helix" evidence="9">
    <location>
        <begin position="134"/>
        <end position="145"/>
    </location>
</feature>
<feature type="helix" evidence="9">
    <location>
        <begin position="154"/>
        <end position="164"/>
    </location>
</feature>
<feature type="helix" evidence="9">
    <location>
        <begin position="167"/>
        <end position="170"/>
    </location>
</feature>
<feature type="helix" evidence="9">
    <location>
        <begin position="175"/>
        <end position="187"/>
    </location>
</feature>
<feature type="helix" evidence="10">
    <location>
        <begin position="489"/>
        <end position="507"/>
    </location>
</feature>
<feature type="strand" evidence="10">
    <location>
        <begin position="510"/>
        <end position="513"/>
    </location>
</feature>
<feature type="helix" evidence="10">
    <location>
        <begin position="519"/>
        <end position="526"/>
    </location>
</feature>
<feature type="helix" evidence="10">
    <location>
        <begin position="533"/>
        <end position="535"/>
    </location>
</feature>
<feature type="helix" evidence="10">
    <location>
        <begin position="539"/>
        <end position="549"/>
    </location>
</feature>
<organism>
    <name type="scientific">Saccharomyces cerevisiae (strain ATCC 204508 / S288c)</name>
    <name type="common">Baker's yeast</name>
    <dbReference type="NCBI Taxonomy" id="559292"/>
    <lineage>
        <taxon>Eukaryota</taxon>
        <taxon>Fungi</taxon>
        <taxon>Dikarya</taxon>
        <taxon>Ascomycota</taxon>
        <taxon>Saccharomycotina</taxon>
        <taxon>Saccharomycetes</taxon>
        <taxon>Saccharomycetales</taxon>
        <taxon>Saccharomycetaceae</taxon>
        <taxon>Saccharomyces</taxon>
    </lineage>
</organism>